<organism>
    <name type="scientific">Salmonella typhimurium (strain LT2 / SGSC1412 / ATCC 700720)</name>
    <dbReference type="NCBI Taxonomy" id="99287"/>
    <lineage>
        <taxon>Bacteria</taxon>
        <taxon>Pseudomonadati</taxon>
        <taxon>Pseudomonadota</taxon>
        <taxon>Gammaproteobacteria</taxon>
        <taxon>Enterobacterales</taxon>
        <taxon>Enterobacteriaceae</taxon>
        <taxon>Salmonella</taxon>
    </lineage>
</organism>
<protein>
    <recommendedName>
        <fullName>ECF RNA polymerase sigma-E factor</fullName>
    </recommendedName>
    <alternativeName>
        <fullName>RNA polymerase sigma-E factor</fullName>
    </alternativeName>
    <alternativeName>
        <fullName>Sigma-24</fullName>
    </alternativeName>
</protein>
<keyword id="KW-0963">Cytoplasm</keyword>
<keyword id="KW-0238">DNA-binding</keyword>
<keyword id="KW-1185">Reference proteome</keyword>
<keyword id="KW-0731">Sigma factor</keyword>
<keyword id="KW-0346">Stress response</keyword>
<keyword id="KW-0804">Transcription</keyword>
<keyword id="KW-0805">Transcription regulation</keyword>
<comment type="function">
    <text evidence="1">Sigma factors are initiation factors that promote the attachment of RNA polymerase (RNAP) to specific initiation sites and are then released. Extracytoplasmic function (ECF) sigma-E controls the envelope stress response, responding to periplasmic protein stress, increased levels of periplasmic lipopolysaccharide (LPS) as well as acid stress, heat shock and oxidative stress; it controls protein processing in the extracytoplasmic compartment (By similarity).</text>
</comment>
<comment type="activity regulation">
    <text evidence="1">ECF sigma-E is held in an inactive form by its cognate anti-sigma factor (RseA) until released by regulated intramembrane proteolysis (RIP). RIP occurs when an extracytoplasmic signal (periplasmic stress and excess LPS) triggers a concerted proteolytic cascade to transmit information and elicit cellular responses. The anti-sigma factor RseA is an inner membrane protein, binding sigma-E in the cytoplasm and RseB in the periplasm. RseA is first cut extracytoplasmically (site-1 protease, S1P, by DegS), then within the membrane itself (site-2 protease, S2P, by RseP), while cytoplasmic proteases (predominantly ClpX-ClpP) finish degrading the regulatory protein, liberating sigma-E. Degradation of RseA requires 2 signals to activate DegS; an outer membrane protein (OMP) signal activates DegS, while an LPS signal causes release of RseB from RseA, freeing RseA to be cleaved (By similarity).</text>
</comment>
<comment type="subunit">
    <text evidence="1">Interacts transiently with the RNAP catalytic core formed by RpoA, RpoB, RpoC and RpoZ (2 alpha, 1 beta, 1 beta' and 1 omega subunit) to form the RNAP holoenzyme that can initiate transcription. Interacts 1:1 with anti-sigma-E factor RseA which prevents binding to RNAP catalytic core (By similarity).</text>
</comment>
<comment type="subcellular location">
    <subcellularLocation>
        <location evidence="1">Cytoplasm</location>
    </subcellularLocation>
    <text evidence="1">Associates with the inner membrane via RseA.</text>
</comment>
<comment type="domain">
    <text evidence="1">The sigma-70 factor domain-2 mediates sequence-specific interaction with the -10 element in promoter DNA, and plays an important role in melting the double-stranded DNA and the formation of the transcription bubble. The sigma-70 factor domain-2 mediates interaction with the RNA polymerase subunits RpoB and RpoC (By similarity).</text>
</comment>
<comment type="domain">
    <text evidence="1">The sigma-70 factor domain-4 contains a helix-turn-helix (H-T-H) motif that mediates interaction with the -35 element in promoter DNA. The domain also mediates interaction with the RNA polymerase subunit RpoA. Interactions between sigma-70 factor domain-4 and anti-sigma factors prevents interaction of sigma factors with the RNA polymerase catalytic core (By similarity).</text>
</comment>
<comment type="disruption phenotype">
    <text evidence="2">Decreases expression of genes encoding virulence proteins (PubMed:19229334). Drastically decreases survival in host macrophages (PubMed:19229334). Decreases virulence in mouse (PubMed:19229334).</text>
</comment>
<comment type="similarity">
    <text evidence="4">Belongs to the sigma-70 factor family. ECF subfamily.</text>
</comment>
<feature type="chain" id="PRO_0000094001" description="ECF RNA polymerase sigma-E factor">
    <location>
        <begin position="1"/>
        <end position="191"/>
    </location>
</feature>
<feature type="DNA-binding region" description="H-T-H motif" evidence="1">
    <location>
        <begin position="156"/>
        <end position="175"/>
    </location>
</feature>
<feature type="region of interest" description="Binds RNAP core" evidence="1">
    <location>
        <begin position="1"/>
        <end position="153"/>
    </location>
</feature>
<feature type="region of interest" description="Sigma-70 factor domain-2" evidence="1">
    <location>
        <begin position="25"/>
        <end position="92"/>
    </location>
</feature>
<feature type="region of interest" description="Sigma-70 factor domain-4" evidence="1">
    <location>
        <begin position="129"/>
        <end position="180"/>
    </location>
</feature>
<feature type="short sequence motif" description="Polymerase core binding" evidence="1">
    <location>
        <begin position="48"/>
        <end position="61"/>
    </location>
</feature>
<gene>
    <name type="primary">rpoE</name>
    <name type="synonym">sigE</name>
    <name type="ordered locus">STM2640</name>
</gene>
<sequence>MSEQLTDQVLVERVQKGDQKAFNLLVVRYQHKVASLVSRYVPSGDVPDVVQESFIKAYRALDSFRGDSAFYTWLYRIAVNTAKNYLVAQGRRPPSSDVDAIEAENFESGGALKEISNPENLMLSEELRQIVFRTIESLPEDLRMAITLRELDGLSYEEIAAIMDCPVGTVRSRIFRAREAIDNKVQPLIRR</sequence>
<dbReference type="EMBL" id="U05669">
    <property type="protein sequence ID" value="AAA57186.1"/>
    <property type="molecule type" value="Genomic_DNA"/>
</dbReference>
<dbReference type="EMBL" id="AE006468">
    <property type="protein sequence ID" value="AAL21534.1"/>
    <property type="molecule type" value="Genomic_DNA"/>
</dbReference>
<dbReference type="RefSeq" id="NP_461575.1">
    <property type="nucleotide sequence ID" value="NC_003197.2"/>
</dbReference>
<dbReference type="RefSeq" id="WP_000003307.1">
    <property type="nucleotide sequence ID" value="NC_003197.2"/>
</dbReference>
<dbReference type="BMRB" id="P0A2F0"/>
<dbReference type="SMR" id="P0A2F0"/>
<dbReference type="STRING" id="99287.STM2640"/>
<dbReference type="PaxDb" id="99287-STM2640"/>
<dbReference type="GeneID" id="1254163"/>
<dbReference type="GeneID" id="92972160"/>
<dbReference type="KEGG" id="stm:STM2640"/>
<dbReference type="PATRIC" id="fig|99287.12.peg.2790"/>
<dbReference type="HOGENOM" id="CLU_047691_3_0_6"/>
<dbReference type="OMA" id="QFYTWLY"/>
<dbReference type="PhylomeDB" id="P0A2F0"/>
<dbReference type="BioCyc" id="SENT99287:STM2640-MONOMER"/>
<dbReference type="PHI-base" id="PHI:2680"/>
<dbReference type="PRO" id="PR:P0A2F0"/>
<dbReference type="Proteomes" id="UP000001014">
    <property type="component" value="Chromosome"/>
</dbReference>
<dbReference type="GO" id="GO:0005737">
    <property type="term" value="C:cytoplasm"/>
    <property type="evidence" value="ECO:0007669"/>
    <property type="project" value="UniProtKB-SubCell"/>
</dbReference>
<dbReference type="GO" id="GO:0003677">
    <property type="term" value="F:DNA binding"/>
    <property type="evidence" value="ECO:0007669"/>
    <property type="project" value="UniProtKB-KW"/>
</dbReference>
<dbReference type="GO" id="GO:0016987">
    <property type="term" value="F:sigma factor activity"/>
    <property type="evidence" value="ECO:0000318"/>
    <property type="project" value="GO_Central"/>
</dbReference>
<dbReference type="GO" id="GO:0006352">
    <property type="term" value="P:DNA-templated transcription initiation"/>
    <property type="evidence" value="ECO:0007669"/>
    <property type="project" value="InterPro"/>
</dbReference>
<dbReference type="GO" id="GO:0006355">
    <property type="term" value="P:regulation of DNA-templated transcription"/>
    <property type="evidence" value="ECO:0000318"/>
    <property type="project" value="GO_Central"/>
</dbReference>
<dbReference type="CDD" id="cd06171">
    <property type="entry name" value="Sigma70_r4"/>
    <property type="match status" value="1"/>
</dbReference>
<dbReference type="FunFam" id="1.10.10.10:FF:000043">
    <property type="entry name" value="RNA polymerase sigma factor"/>
    <property type="match status" value="1"/>
</dbReference>
<dbReference type="FunFam" id="1.10.1740.10:FF:000001">
    <property type="entry name" value="RNA polymerase sigma factor"/>
    <property type="match status" value="1"/>
</dbReference>
<dbReference type="Gene3D" id="1.10.1740.10">
    <property type="match status" value="1"/>
</dbReference>
<dbReference type="Gene3D" id="1.10.10.10">
    <property type="entry name" value="Winged helix-like DNA-binding domain superfamily/Winged helix DNA-binding domain"/>
    <property type="match status" value="1"/>
</dbReference>
<dbReference type="InterPro" id="IPR039425">
    <property type="entry name" value="RNA_pol_sigma-70-like"/>
</dbReference>
<dbReference type="InterPro" id="IPR014284">
    <property type="entry name" value="RNA_pol_sigma-70_dom"/>
</dbReference>
<dbReference type="InterPro" id="IPR000838">
    <property type="entry name" value="RNA_pol_sigma70_ECF_CS"/>
</dbReference>
<dbReference type="InterPro" id="IPR007627">
    <property type="entry name" value="RNA_pol_sigma70_r2"/>
</dbReference>
<dbReference type="InterPro" id="IPR013249">
    <property type="entry name" value="RNA_pol_sigma70_r4_t2"/>
</dbReference>
<dbReference type="InterPro" id="IPR014286">
    <property type="entry name" value="RNA_pol_sigma70_RpoE"/>
</dbReference>
<dbReference type="InterPro" id="IPR013325">
    <property type="entry name" value="RNA_pol_sigma_r2"/>
</dbReference>
<dbReference type="InterPro" id="IPR013324">
    <property type="entry name" value="RNA_pol_sigma_r3/r4-like"/>
</dbReference>
<dbReference type="InterPro" id="IPR036388">
    <property type="entry name" value="WH-like_DNA-bd_sf"/>
</dbReference>
<dbReference type="NCBIfam" id="TIGR02939">
    <property type="entry name" value="RpoE_Sigma70"/>
    <property type="match status" value="1"/>
</dbReference>
<dbReference type="NCBIfam" id="TIGR02937">
    <property type="entry name" value="sigma70-ECF"/>
    <property type="match status" value="1"/>
</dbReference>
<dbReference type="PANTHER" id="PTHR43133:SF53">
    <property type="entry name" value="ECF RNA POLYMERASE SIGMA-E FACTOR"/>
    <property type="match status" value="1"/>
</dbReference>
<dbReference type="PANTHER" id="PTHR43133">
    <property type="entry name" value="RNA POLYMERASE ECF-TYPE SIGMA FACTO"/>
    <property type="match status" value="1"/>
</dbReference>
<dbReference type="Pfam" id="PF04542">
    <property type="entry name" value="Sigma70_r2"/>
    <property type="match status" value="1"/>
</dbReference>
<dbReference type="Pfam" id="PF08281">
    <property type="entry name" value="Sigma70_r4_2"/>
    <property type="match status" value="1"/>
</dbReference>
<dbReference type="SUPFAM" id="SSF88946">
    <property type="entry name" value="Sigma2 domain of RNA polymerase sigma factors"/>
    <property type="match status" value="1"/>
</dbReference>
<dbReference type="SUPFAM" id="SSF88659">
    <property type="entry name" value="Sigma3 and sigma4 domains of RNA polymerase sigma factors"/>
    <property type="match status" value="1"/>
</dbReference>
<dbReference type="PROSITE" id="PS01063">
    <property type="entry name" value="SIGMA70_ECF"/>
    <property type="match status" value="1"/>
</dbReference>
<accession>P0A2F0</accession>
<accession>P37401</accession>
<name>RPOE_SALTY</name>
<reference key="1">
    <citation type="journal article" date="1994" name="J. Bacteriol.">
        <title>Analysis of promoters controlled by the putative sigma factor AlgU regulating conversion to mucoidy in Pseudomonas aeruginosa: relationship to sigma E and stress response.</title>
        <authorList>
            <person name="Martin D.W."/>
            <person name="Schurr M.J."/>
            <person name="Yu H."/>
            <person name="Deretic V."/>
        </authorList>
    </citation>
    <scope>NUCLEOTIDE SEQUENCE [GENOMIC DNA]</scope>
    <source>
        <strain>C3181</strain>
    </source>
</reference>
<reference key="2">
    <citation type="journal article" date="2001" name="Nature">
        <title>Complete genome sequence of Salmonella enterica serovar Typhimurium LT2.</title>
        <authorList>
            <person name="McClelland M."/>
            <person name="Sanderson K.E."/>
            <person name="Spieth J."/>
            <person name="Clifton S.W."/>
            <person name="Latreille P."/>
            <person name="Courtney L."/>
            <person name="Porwollik S."/>
            <person name="Ali J."/>
            <person name="Dante M."/>
            <person name="Du F."/>
            <person name="Hou S."/>
            <person name="Layman D."/>
            <person name="Leonard S."/>
            <person name="Nguyen C."/>
            <person name="Scott K."/>
            <person name="Holmes A."/>
            <person name="Grewal N."/>
            <person name="Mulvaney E."/>
            <person name="Ryan E."/>
            <person name="Sun H."/>
            <person name="Florea L."/>
            <person name="Miller W."/>
            <person name="Stoneking T."/>
            <person name="Nhan M."/>
            <person name="Waterston R."/>
            <person name="Wilson R.K."/>
        </authorList>
    </citation>
    <scope>NUCLEOTIDE SEQUENCE [LARGE SCALE GENOMIC DNA]</scope>
    <source>
        <strain>LT2 / SGSC1412 / ATCC 700720</strain>
    </source>
</reference>
<reference key="3">
    <citation type="journal article" date="2009" name="PLoS Pathog.">
        <title>Coordinated regulation of virulence during systemic infection of Salmonella enterica serovar Typhimurium.</title>
        <authorList>
            <person name="Yoon H."/>
            <person name="McDermott J.E."/>
            <person name="Porwollik S."/>
            <person name="McClelland M."/>
            <person name="Heffron F."/>
        </authorList>
    </citation>
    <scope>DISRUPTION PHENOTYPE</scope>
    <source>
        <strain evidence="3">14028s / SGSC 2262</strain>
    </source>
</reference>
<evidence type="ECO:0000250" key="1"/>
<evidence type="ECO:0000269" key="2">
    <source>
    </source>
</evidence>
<evidence type="ECO:0000303" key="3">
    <source>
    </source>
</evidence>
<evidence type="ECO:0000305" key="4"/>
<proteinExistence type="inferred from homology"/>